<organism>
    <name type="scientific">Syntrophobacter fumaroxidans (strain DSM 10017 / MPOB)</name>
    <dbReference type="NCBI Taxonomy" id="335543"/>
    <lineage>
        <taxon>Bacteria</taxon>
        <taxon>Pseudomonadati</taxon>
        <taxon>Thermodesulfobacteriota</taxon>
        <taxon>Syntrophobacteria</taxon>
        <taxon>Syntrophobacterales</taxon>
        <taxon>Syntrophobacteraceae</taxon>
        <taxon>Syntrophobacter</taxon>
    </lineage>
</organism>
<feature type="chain" id="PRO_1000054885" description="Small ribosomal subunit protein uS15">
    <location>
        <begin position="1"/>
        <end position="89"/>
    </location>
</feature>
<evidence type="ECO:0000255" key="1">
    <source>
        <dbReference type="HAMAP-Rule" id="MF_01343"/>
    </source>
</evidence>
<evidence type="ECO:0000305" key="2"/>
<proteinExistence type="inferred from homology"/>
<reference key="1">
    <citation type="submission" date="2006-10" db="EMBL/GenBank/DDBJ databases">
        <title>Complete sequence of Syntrophobacter fumaroxidans MPOB.</title>
        <authorList>
            <consortium name="US DOE Joint Genome Institute"/>
            <person name="Copeland A."/>
            <person name="Lucas S."/>
            <person name="Lapidus A."/>
            <person name="Barry K."/>
            <person name="Detter J.C."/>
            <person name="Glavina del Rio T."/>
            <person name="Hammon N."/>
            <person name="Israni S."/>
            <person name="Pitluck S."/>
            <person name="Goltsman E.G."/>
            <person name="Martinez M."/>
            <person name="Schmutz J."/>
            <person name="Larimer F."/>
            <person name="Land M."/>
            <person name="Hauser L."/>
            <person name="Kyrpides N."/>
            <person name="Kim E."/>
            <person name="Boone D.R."/>
            <person name="Brockman F."/>
            <person name="Culley D."/>
            <person name="Ferry J."/>
            <person name="Gunsalus R."/>
            <person name="McInerney M.J."/>
            <person name="Morrison M."/>
            <person name="Plugge C."/>
            <person name="Rohlin L."/>
            <person name="Scholten J."/>
            <person name="Sieber J."/>
            <person name="Stams A.J.M."/>
            <person name="Worm P."/>
            <person name="Henstra A.M."/>
            <person name="Richardson P."/>
        </authorList>
    </citation>
    <scope>NUCLEOTIDE SEQUENCE [LARGE SCALE GENOMIC DNA]</scope>
    <source>
        <strain>DSM 10017 / MPOB</strain>
    </source>
</reference>
<protein>
    <recommendedName>
        <fullName evidence="1">Small ribosomal subunit protein uS15</fullName>
    </recommendedName>
    <alternativeName>
        <fullName evidence="2">30S ribosomal protein S15</fullName>
    </alternativeName>
</protein>
<accession>A0LHM3</accession>
<dbReference type="EMBL" id="CP000478">
    <property type="protein sequence ID" value="ABK16925.1"/>
    <property type="molecule type" value="Genomic_DNA"/>
</dbReference>
<dbReference type="SMR" id="A0LHM3"/>
<dbReference type="FunCoup" id="A0LHM3">
    <property type="interactions" value="505"/>
</dbReference>
<dbReference type="STRING" id="335543.Sfum_1233"/>
<dbReference type="KEGG" id="sfu:Sfum_1233"/>
<dbReference type="eggNOG" id="COG0184">
    <property type="taxonomic scope" value="Bacteria"/>
</dbReference>
<dbReference type="HOGENOM" id="CLU_148518_0_0_7"/>
<dbReference type="InParanoid" id="A0LHM3"/>
<dbReference type="Proteomes" id="UP000001784">
    <property type="component" value="Chromosome"/>
</dbReference>
<dbReference type="GO" id="GO:0022627">
    <property type="term" value="C:cytosolic small ribosomal subunit"/>
    <property type="evidence" value="ECO:0007669"/>
    <property type="project" value="TreeGrafter"/>
</dbReference>
<dbReference type="GO" id="GO:0019843">
    <property type="term" value="F:rRNA binding"/>
    <property type="evidence" value="ECO:0007669"/>
    <property type="project" value="UniProtKB-UniRule"/>
</dbReference>
<dbReference type="GO" id="GO:0003735">
    <property type="term" value="F:structural constituent of ribosome"/>
    <property type="evidence" value="ECO:0007669"/>
    <property type="project" value="InterPro"/>
</dbReference>
<dbReference type="GO" id="GO:0006412">
    <property type="term" value="P:translation"/>
    <property type="evidence" value="ECO:0007669"/>
    <property type="project" value="UniProtKB-UniRule"/>
</dbReference>
<dbReference type="CDD" id="cd00353">
    <property type="entry name" value="Ribosomal_S15p_S13e"/>
    <property type="match status" value="1"/>
</dbReference>
<dbReference type="FunFam" id="1.10.287.10:FF:000002">
    <property type="entry name" value="30S ribosomal protein S15"/>
    <property type="match status" value="1"/>
</dbReference>
<dbReference type="Gene3D" id="6.10.250.3130">
    <property type="match status" value="1"/>
</dbReference>
<dbReference type="Gene3D" id="1.10.287.10">
    <property type="entry name" value="S15/NS1, RNA-binding"/>
    <property type="match status" value="1"/>
</dbReference>
<dbReference type="HAMAP" id="MF_01343_B">
    <property type="entry name" value="Ribosomal_uS15_B"/>
    <property type="match status" value="1"/>
</dbReference>
<dbReference type="InterPro" id="IPR000589">
    <property type="entry name" value="Ribosomal_uS15"/>
</dbReference>
<dbReference type="InterPro" id="IPR005290">
    <property type="entry name" value="Ribosomal_uS15_bac-type"/>
</dbReference>
<dbReference type="InterPro" id="IPR009068">
    <property type="entry name" value="uS15_NS1_RNA-bd_sf"/>
</dbReference>
<dbReference type="NCBIfam" id="TIGR00952">
    <property type="entry name" value="S15_bact"/>
    <property type="match status" value="1"/>
</dbReference>
<dbReference type="PANTHER" id="PTHR23321">
    <property type="entry name" value="RIBOSOMAL PROTEIN S15, BACTERIAL AND ORGANELLAR"/>
    <property type="match status" value="1"/>
</dbReference>
<dbReference type="PANTHER" id="PTHR23321:SF26">
    <property type="entry name" value="SMALL RIBOSOMAL SUBUNIT PROTEIN US15M"/>
    <property type="match status" value="1"/>
</dbReference>
<dbReference type="Pfam" id="PF00312">
    <property type="entry name" value="Ribosomal_S15"/>
    <property type="match status" value="1"/>
</dbReference>
<dbReference type="SMART" id="SM01387">
    <property type="entry name" value="Ribosomal_S15"/>
    <property type="match status" value="1"/>
</dbReference>
<dbReference type="SUPFAM" id="SSF47060">
    <property type="entry name" value="S15/NS1 RNA-binding domain"/>
    <property type="match status" value="1"/>
</dbReference>
<dbReference type="PROSITE" id="PS00362">
    <property type="entry name" value="RIBOSOMAL_S15"/>
    <property type="match status" value="1"/>
</dbReference>
<sequence length="89" mass="10538">MVMTPEKKKEIIEGFKVHSADTGSPEVQIALLSERISYLTEHFKMHKKDHHSRRGLLKLVGQRRQLLNYLKKKNAERYNNVIERLGLRR</sequence>
<name>RS15_SYNFM</name>
<gene>
    <name evidence="1" type="primary">rpsO</name>
    <name type="ordered locus">Sfum_1233</name>
</gene>
<keyword id="KW-1185">Reference proteome</keyword>
<keyword id="KW-0687">Ribonucleoprotein</keyword>
<keyword id="KW-0689">Ribosomal protein</keyword>
<keyword id="KW-0694">RNA-binding</keyword>
<keyword id="KW-0699">rRNA-binding</keyword>
<comment type="function">
    <text evidence="1">One of the primary rRNA binding proteins, it binds directly to 16S rRNA where it helps nucleate assembly of the platform of the 30S subunit by binding and bridging several RNA helices of the 16S rRNA.</text>
</comment>
<comment type="function">
    <text evidence="1">Forms an intersubunit bridge (bridge B4) with the 23S rRNA of the 50S subunit in the ribosome.</text>
</comment>
<comment type="subunit">
    <text evidence="1">Part of the 30S ribosomal subunit. Forms a bridge to the 50S subunit in the 70S ribosome, contacting the 23S rRNA.</text>
</comment>
<comment type="similarity">
    <text evidence="1">Belongs to the universal ribosomal protein uS15 family.</text>
</comment>